<sequence>MFWKLPLLLGLLALGPHVCSWMFEDIGKTGQEFSMCVEFAIHHFNEHQPDENAYKLLWVRRSQHKKFSLTYLMDLHLGRTICKKHDEDIDNCPLQEGPEGKKVNCTFIVDSRPLYTKFTLLNSTCQQI</sequence>
<dbReference type="EMBL" id="BC111315">
    <property type="protein sequence ID" value="AAI11316.1"/>
    <property type="molecule type" value="mRNA"/>
</dbReference>
<dbReference type="RefSeq" id="NP_001071543.1">
    <property type="nucleotide sequence ID" value="NM_001078075.1"/>
</dbReference>
<dbReference type="SMR" id="Q2NKZ5"/>
<dbReference type="FunCoup" id="Q2NKZ5">
    <property type="interactions" value="2"/>
</dbReference>
<dbReference type="STRING" id="9913.ENSBTAP00000039161"/>
<dbReference type="GlyGen" id="Q2NKZ5">
    <property type="glycosylation" value="1 site"/>
</dbReference>
<dbReference type="PaxDb" id="9913-ENSBTAP00000039161"/>
<dbReference type="GeneID" id="617402"/>
<dbReference type="KEGG" id="bta:617402"/>
<dbReference type="VEuPathDB" id="HostDB:ENSBTAG00000027420"/>
<dbReference type="eggNOG" id="ENOG502TDK9">
    <property type="taxonomic scope" value="Eukaryota"/>
</dbReference>
<dbReference type="HOGENOM" id="CLU_118168_3_2_1"/>
<dbReference type="InParanoid" id="Q2NKZ5"/>
<dbReference type="OMA" id="TCVERSW"/>
<dbReference type="OrthoDB" id="9829654at2759"/>
<dbReference type="Proteomes" id="UP000009136">
    <property type="component" value="Chromosome 13"/>
</dbReference>
<dbReference type="Bgee" id="ENSBTAG00000027420">
    <property type="expression patterns" value="Expressed in spermatocyte and 44 other cell types or tissues"/>
</dbReference>
<dbReference type="GO" id="GO:0005576">
    <property type="term" value="C:extracellular region"/>
    <property type="evidence" value="ECO:0007669"/>
    <property type="project" value="UniProtKB-SubCell"/>
</dbReference>
<dbReference type="GO" id="GO:0004869">
    <property type="term" value="F:cysteine-type endopeptidase inhibitor activity"/>
    <property type="evidence" value="ECO:0007669"/>
    <property type="project" value="UniProtKB-KW"/>
</dbReference>
<dbReference type="CDD" id="cd00042">
    <property type="entry name" value="CY"/>
    <property type="match status" value="1"/>
</dbReference>
<dbReference type="Gene3D" id="3.10.450.10">
    <property type="match status" value="1"/>
</dbReference>
<dbReference type="InterPro" id="IPR000010">
    <property type="entry name" value="Cystatin_dom"/>
</dbReference>
<dbReference type="InterPro" id="IPR046350">
    <property type="entry name" value="Cystatin_sf"/>
</dbReference>
<dbReference type="InterPro" id="IPR052333">
    <property type="entry name" value="Cystatin_spermatogenesis"/>
</dbReference>
<dbReference type="PANTHER" id="PTHR47393:SF1">
    <property type="entry name" value="CYSTATIN-12"/>
    <property type="match status" value="1"/>
</dbReference>
<dbReference type="PANTHER" id="PTHR47393">
    <property type="entry name" value="CYSTATIN-12-RELATED"/>
    <property type="match status" value="1"/>
</dbReference>
<dbReference type="Pfam" id="PF00031">
    <property type="entry name" value="Cystatin"/>
    <property type="match status" value="1"/>
</dbReference>
<dbReference type="SMART" id="SM00043">
    <property type="entry name" value="CY"/>
    <property type="match status" value="1"/>
</dbReference>
<dbReference type="SUPFAM" id="SSF54403">
    <property type="entry name" value="Cystatin/monellin"/>
    <property type="match status" value="1"/>
</dbReference>
<protein>
    <recommendedName>
        <fullName>Probable cystatin-15</fullName>
    </recommendedName>
</protein>
<evidence type="ECO:0000250" key="1"/>
<evidence type="ECO:0000255" key="2"/>
<evidence type="ECO:0000305" key="3"/>
<organism>
    <name type="scientific">Bos taurus</name>
    <name type="common">Bovine</name>
    <dbReference type="NCBI Taxonomy" id="9913"/>
    <lineage>
        <taxon>Eukaryota</taxon>
        <taxon>Metazoa</taxon>
        <taxon>Chordata</taxon>
        <taxon>Craniata</taxon>
        <taxon>Vertebrata</taxon>
        <taxon>Euteleostomi</taxon>
        <taxon>Mammalia</taxon>
        <taxon>Eutheria</taxon>
        <taxon>Laurasiatheria</taxon>
        <taxon>Artiodactyla</taxon>
        <taxon>Ruminantia</taxon>
        <taxon>Pecora</taxon>
        <taxon>Bovidae</taxon>
        <taxon>Bovinae</taxon>
        <taxon>Bos</taxon>
    </lineage>
</organism>
<feature type="signal peptide" evidence="2">
    <location>
        <begin position="1"/>
        <end position="20"/>
    </location>
</feature>
<feature type="chain" id="PRO_0000285801" description="Probable cystatin-15">
    <location>
        <begin position="21"/>
        <end position="128"/>
    </location>
</feature>
<feature type="glycosylation site" description="N-linked (GlcNAc...) asparagine" evidence="2">
    <location>
        <position position="104"/>
    </location>
</feature>
<feature type="disulfide bond" evidence="1">
    <location>
        <begin position="82"/>
        <end position="92"/>
    </location>
</feature>
<feature type="disulfide bond" evidence="1">
    <location>
        <begin position="105"/>
        <end position="125"/>
    </location>
</feature>
<keyword id="KW-1015">Disulfide bond</keyword>
<keyword id="KW-0325">Glycoprotein</keyword>
<keyword id="KW-0646">Protease inhibitor</keyword>
<keyword id="KW-1185">Reference proteome</keyword>
<keyword id="KW-0964">Secreted</keyword>
<keyword id="KW-0732">Signal</keyword>
<keyword id="KW-0789">Thiol protease inhibitor</keyword>
<comment type="subcellular location">
    <subcellularLocation>
        <location evidence="3">Secreted</location>
    </subcellularLocation>
</comment>
<comment type="similarity">
    <text evidence="3">Belongs to the cystatin family.</text>
</comment>
<proteinExistence type="evidence at transcript level"/>
<name>CST15_BOVIN</name>
<accession>Q2NKZ5</accession>
<reference key="1">
    <citation type="submission" date="2005-12" db="EMBL/GenBank/DDBJ databases">
        <authorList>
            <consortium name="NIH - Mammalian Gene Collection (MGC) project"/>
        </authorList>
    </citation>
    <scope>NUCLEOTIDE SEQUENCE [LARGE SCALE MRNA]</scope>
    <source>
        <strain>Crossbred X Angus</strain>
        <tissue>Liver</tissue>
    </source>
</reference>